<protein>
    <recommendedName>
        <fullName evidence="1">Protein nucleotidyltransferase YdiU</fullName>
        <ecNumber evidence="1">2.7.7.-</ecNumber>
    </recommendedName>
    <alternativeName>
        <fullName evidence="1">Protein adenylyltransferase YdiU</fullName>
        <ecNumber evidence="1">2.7.7.108</ecNumber>
    </alternativeName>
    <alternativeName>
        <fullName evidence="1">Protein uridylyltransferase YdiU</fullName>
        <ecNumber evidence="1">2.7.7.-</ecNumber>
    </alternativeName>
</protein>
<feature type="chain" id="PRO_0000121418" description="Protein nucleotidyltransferase YdiU">
    <location>
        <begin position="1"/>
        <end position="478"/>
    </location>
</feature>
<feature type="active site" description="Proton acceptor" evidence="1">
    <location>
        <position position="246"/>
    </location>
</feature>
<feature type="binding site" evidence="1">
    <location>
        <position position="84"/>
    </location>
    <ligand>
        <name>ATP</name>
        <dbReference type="ChEBI" id="CHEBI:30616"/>
    </ligand>
</feature>
<feature type="binding site" evidence="1">
    <location>
        <position position="86"/>
    </location>
    <ligand>
        <name>ATP</name>
        <dbReference type="ChEBI" id="CHEBI:30616"/>
    </ligand>
</feature>
<feature type="binding site" evidence="1">
    <location>
        <position position="87"/>
    </location>
    <ligand>
        <name>ATP</name>
        <dbReference type="ChEBI" id="CHEBI:30616"/>
    </ligand>
</feature>
<feature type="binding site" evidence="1">
    <location>
        <position position="107"/>
    </location>
    <ligand>
        <name>ATP</name>
        <dbReference type="ChEBI" id="CHEBI:30616"/>
    </ligand>
</feature>
<feature type="binding site" evidence="1">
    <location>
        <position position="119"/>
    </location>
    <ligand>
        <name>ATP</name>
        <dbReference type="ChEBI" id="CHEBI:30616"/>
    </ligand>
</feature>
<feature type="binding site" evidence="1">
    <location>
        <position position="120"/>
    </location>
    <ligand>
        <name>ATP</name>
        <dbReference type="ChEBI" id="CHEBI:30616"/>
    </ligand>
</feature>
<feature type="binding site" evidence="1">
    <location>
        <position position="170"/>
    </location>
    <ligand>
        <name>ATP</name>
        <dbReference type="ChEBI" id="CHEBI:30616"/>
    </ligand>
</feature>
<feature type="binding site" evidence="1">
    <location>
        <position position="177"/>
    </location>
    <ligand>
        <name>ATP</name>
        <dbReference type="ChEBI" id="CHEBI:30616"/>
    </ligand>
</feature>
<feature type="binding site" evidence="1">
    <location>
        <position position="247"/>
    </location>
    <ligand>
        <name>Mg(2+)</name>
        <dbReference type="ChEBI" id="CHEBI:18420"/>
    </ligand>
</feature>
<feature type="binding site" evidence="1">
    <location>
        <position position="256"/>
    </location>
    <ligand>
        <name>ATP</name>
        <dbReference type="ChEBI" id="CHEBI:30616"/>
    </ligand>
</feature>
<feature type="binding site" evidence="1">
    <location>
        <position position="256"/>
    </location>
    <ligand>
        <name>Mg(2+)</name>
        <dbReference type="ChEBI" id="CHEBI:18420"/>
    </ligand>
</feature>
<sequence>MTLSFITRWRDELPETYTALSPTPLNNARLIWHNTELANTLSIPSSLFKNGAGVWGGETLLPGMSPLAQVYSGHQFGVWAGQLGDGRGILLGEQLLADGTTMDWHLKGAGLTPYSRMGDGRAVLRSTIRESLASEAMHYLGIPTTRALSIVTSDSPVYRETVEPGAMLMRVAPSHLRFGHFEHFYYRREPDKVRQLADFAIRHYWSHLEDDEDKYRLWFNDVVARTASLIAQWQTVGFAHGVMNTDNMSLLGLTLDYGPFGFLNDYEPGFICNHSDHQGRYSFDNQPAVALWILQRLAQTLSPFVAVDALNEALDSYQQVLLTHYGQRMRQKLGFMTEQKEDNALLNELFSLMARERSDYTRTFRMLSLTEQHSAASPLRDEFIDRAAFDDWFARYRGRLQQDEVSDSERQQLMQSVNPALVLRNWLAQRAIEAAEKGDMTELHRLHEALRNPFSDRDDDYVSRPPDWGKRLEVSCSS</sequence>
<organism>
    <name type="scientific">Escherichia coli O157:H7</name>
    <dbReference type="NCBI Taxonomy" id="83334"/>
    <lineage>
        <taxon>Bacteria</taxon>
        <taxon>Pseudomonadati</taxon>
        <taxon>Pseudomonadota</taxon>
        <taxon>Gammaproteobacteria</taxon>
        <taxon>Enterobacterales</taxon>
        <taxon>Enterobacteriaceae</taxon>
        <taxon>Escherichia</taxon>
    </lineage>
</organism>
<evidence type="ECO:0000255" key="1">
    <source>
        <dbReference type="HAMAP-Rule" id="MF_00692"/>
    </source>
</evidence>
<name>SELO_ECO57</name>
<dbReference type="EC" id="2.7.7.-" evidence="1"/>
<dbReference type="EC" id="2.7.7.108" evidence="1"/>
<dbReference type="EMBL" id="AE005174">
    <property type="protein sequence ID" value="AAG56693.1"/>
    <property type="molecule type" value="Genomic_DNA"/>
</dbReference>
<dbReference type="EMBL" id="BA000007">
    <property type="protein sequence ID" value="BAB35836.1"/>
    <property type="molecule type" value="Genomic_DNA"/>
</dbReference>
<dbReference type="PIR" id="A85779">
    <property type="entry name" value="A85779"/>
</dbReference>
<dbReference type="PIR" id="E90930">
    <property type="entry name" value="E90930"/>
</dbReference>
<dbReference type="RefSeq" id="WP_000175641.1">
    <property type="nucleotide sequence ID" value="NZ_VOAI01000007.1"/>
</dbReference>
<dbReference type="SMR" id="Q8X5W3"/>
<dbReference type="STRING" id="155864.Z2735"/>
<dbReference type="KEGG" id="ece:Z2735"/>
<dbReference type="KEGG" id="ecs:ECs_2413"/>
<dbReference type="PATRIC" id="fig|386585.9.peg.2527"/>
<dbReference type="eggNOG" id="COG0397">
    <property type="taxonomic scope" value="Bacteria"/>
</dbReference>
<dbReference type="HOGENOM" id="CLU_010245_4_0_6"/>
<dbReference type="OMA" id="YGPYGWL"/>
<dbReference type="Proteomes" id="UP000000558">
    <property type="component" value="Chromosome"/>
</dbReference>
<dbReference type="Proteomes" id="UP000002519">
    <property type="component" value="Chromosome"/>
</dbReference>
<dbReference type="GO" id="GO:0070733">
    <property type="term" value="F:AMPylase activity"/>
    <property type="evidence" value="ECO:0007669"/>
    <property type="project" value="RHEA"/>
</dbReference>
<dbReference type="GO" id="GO:0005524">
    <property type="term" value="F:ATP binding"/>
    <property type="evidence" value="ECO:0007669"/>
    <property type="project" value="UniProtKB-UniRule"/>
</dbReference>
<dbReference type="GO" id="GO:0000287">
    <property type="term" value="F:magnesium ion binding"/>
    <property type="evidence" value="ECO:0007669"/>
    <property type="project" value="UniProtKB-UniRule"/>
</dbReference>
<dbReference type="HAMAP" id="MF_00692">
    <property type="entry name" value="YdiU_SelO"/>
    <property type="match status" value="1"/>
</dbReference>
<dbReference type="InterPro" id="IPR054838">
    <property type="entry name" value="adnlytase_SelO"/>
</dbReference>
<dbReference type="InterPro" id="IPR003846">
    <property type="entry name" value="SelO"/>
</dbReference>
<dbReference type="NCBIfam" id="NF040880">
    <property type="entry name" value="adnlytase_SelO"/>
    <property type="match status" value="1"/>
</dbReference>
<dbReference type="NCBIfam" id="NF000658">
    <property type="entry name" value="PRK00029.1"/>
    <property type="match status" value="1"/>
</dbReference>
<dbReference type="PANTHER" id="PTHR32057">
    <property type="entry name" value="PROTEIN ADENYLYLTRANSFERASE SELO, MITOCHONDRIAL"/>
    <property type="match status" value="1"/>
</dbReference>
<dbReference type="PANTHER" id="PTHR32057:SF14">
    <property type="entry name" value="PROTEIN ADENYLYLTRANSFERASE SELO, MITOCHONDRIAL"/>
    <property type="match status" value="1"/>
</dbReference>
<dbReference type="Pfam" id="PF02696">
    <property type="entry name" value="SelO"/>
    <property type="match status" value="1"/>
</dbReference>
<keyword id="KW-0067">ATP-binding</keyword>
<keyword id="KW-0460">Magnesium</keyword>
<keyword id="KW-0464">Manganese</keyword>
<keyword id="KW-0479">Metal-binding</keyword>
<keyword id="KW-0547">Nucleotide-binding</keyword>
<keyword id="KW-0548">Nucleotidyltransferase</keyword>
<keyword id="KW-1185">Reference proteome</keyword>
<keyword id="KW-0808">Transferase</keyword>
<comment type="function">
    <text evidence="1">Nucleotidyltransferase involved in the post-translational modification of proteins. It can catalyze the addition of adenosine monophosphate (AMP) or uridine monophosphate (UMP) to a protein, resulting in modifications known as AMPylation and UMPylation.</text>
</comment>
<comment type="catalytic activity">
    <reaction evidence="1">
        <text>L-seryl-[protein] + ATP = 3-O-(5'-adenylyl)-L-seryl-[protein] + diphosphate</text>
        <dbReference type="Rhea" id="RHEA:58120"/>
        <dbReference type="Rhea" id="RHEA-COMP:9863"/>
        <dbReference type="Rhea" id="RHEA-COMP:15073"/>
        <dbReference type="ChEBI" id="CHEBI:29999"/>
        <dbReference type="ChEBI" id="CHEBI:30616"/>
        <dbReference type="ChEBI" id="CHEBI:33019"/>
        <dbReference type="ChEBI" id="CHEBI:142516"/>
        <dbReference type="EC" id="2.7.7.108"/>
    </reaction>
</comment>
<comment type="catalytic activity">
    <reaction evidence="1">
        <text>L-threonyl-[protein] + ATP = 3-O-(5'-adenylyl)-L-threonyl-[protein] + diphosphate</text>
        <dbReference type="Rhea" id="RHEA:54292"/>
        <dbReference type="Rhea" id="RHEA-COMP:11060"/>
        <dbReference type="Rhea" id="RHEA-COMP:13847"/>
        <dbReference type="ChEBI" id="CHEBI:30013"/>
        <dbReference type="ChEBI" id="CHEBI:30616"/>
        <dbReference type="ChEBI" id="CHEBI:33019"/>
        <dbReference type="ChEBI" id="CHEBI:138113"/>
        <dbReference type="EC" id="2.7.7.108"/>
    </reaction>
</comment>
<comment type="catalytic activity">
    <reaction evidence="1">
        <text>L-tyrosyl-[protein] + ATP = O-(5'-adenylyl)-L-tyrosyl-[protein] + diphosphate</text>
        <dbReference type="Rhea" id="RHEA:54288"/>
        <dbReference type="Rhea" id="RHEA-COMP:10136"/>
        <dbReference type="Rhea" id="RHEA-COMP:13846"/>
        <dbReference type="ChEBI" id="CHEBI:30616"/>
        <dbReference type="ChEBI" id="CHEBI:33019"/>
        <dbReference type="ChEBI" id="CHEBI:46858"/>
        <dbReference type="ChEBI" id="CHEBI:83624"/>
        <dbReference type="EC" id="2.7.7.108"/>
    </reaction>
</comment>
<comment type="catalytic activity">
    <reaction evidence="1">
        <text>L-histidyl-[protein] + UTP = N(tele)-(5'-uridylyl)-L-histidyl-[protein] + diphosphate</text>
        <dbReference type="Rhea" id="RHEA:83891"/>
        <dbReference type="Rhea" id="RHEA-COMP:9745"/>
        <dbReference type="Rhea" id="RHEA-COMP:20239"/>
        <dbReference type="ChEBI" id="CHEBI:29979"/>
        <dbReference type="ChEBI" id="CHEBI:33019"/>
        <dbReference type="ChEBI" id="CHEBI:46398"/>
        <dbReference type="ChEBI" id="CHEBI:233474"/>
    </reaction>
</comment>
<comment type="catalytic activity">
    <reaction evidence="1">
        <text>L-seryl-[protein] + UTP = O-(5'-uridylyl)-L-seryl-[protein] + diphosphate</text>
        <dbReference type="Rhea" id="RHEA:64604"/>
        <dbReference type="Rhea" id="RHEA-COMP:9863"/>
        <dbReference type="Rhea" id="RHEA-COMP:16635"/>
        <dbReference type="ChEBI" id="CHEBI:29999"/>
        <dbReference type="ChEBI" id="CHEBI:33019"/>
        <dbReference type="ChEBI" id="CHEBI:46398"/>
        <dbReference type="ChEBI" id="CHEBI:156051"/>
    </reaction>
</comment>
<comment type="catalytic activity">
    <reaction evidence="1">
        <text>L-tyrosyl-[protein] + UTP = O-(5'-uridylyl)-L-tyrosyl-[protein] + diphosphate</text>
        <dbReference type="Rhea" id="RHEA:83887"/>
        <dbReference type="Rhea" id="RHEA-COMP:10136"/>
        <dbReference type="Rhea" id="RHEA-COMP:20238"/>
        <dbReference type="ChEBI" id="CHEBI:33019"/>
        <dbReference type="ChEBI" id="CHEBI:46398"/>
        <dbReference type="ChEBI" id="CHEBI:46858"/>
        <dbReference type="ChEBI" id="CHEBI:90602"/>
    </reaction>
</comment>
<comment type="cofactor">
    <cofactor evidence="1">
        <name>Mg(2+)</name>
        <dbReference type="ChEBI" id="CHEBI:18420"/>
    </cofactor>
    <cofactor evidence="1">
        <name>Mn(2+)</name>
        <dbReference type="ChEBI" id="CHEBI:29035"/>
    </cofactor>
</comment>
<comment type="similarity">
    <text evidence="1">Belongs to the SELO family.</text>
</comment>
<reference key="1">
    <citation type="journal article" date="2001" name="Nature">
        <title>Genome sequence of enterohaemorrhagic Escherichia coli O157:H7.</title>
        <authorList>
            <person name="Perna N.T."/>
            <person name="Plunkett G. III"/>
            <person name="Burland V."/>
            <person name="Mau B."/>
            <person name="Glasner J.D."/>
            <person name="Rose D.J."/>
            <person name="Mayhew G.F."/>
            <person name="Evans P.S."/>
            <person name="Gregor J."/>
            <person name="Kirkpatrick H.A."/>
            <person name="Posfai G."/>
            <person name="Hackett J."/>
            <person name="Klink S."/>
            <person name="Boutin A."/>
            <person name="Shao Y."/>
            <person name="Miller L."/>
            <person name="Grotbeck E.J."/>
            <person name="Davis N.W."/>
            <person name="Lim A."/>
            <person name="Dimalanta E.T."/>
            <person name="Potamousis K."/>
            <person name="Apodaca J."/>
            <person name="Anantharaman T.S."/>
            <person name="Lin J."/>
            <person name="Yen G."/>
            <person name="Schwartz D.C."/>
            <person name="Welch R.A."/>
            <person name="Blattner F.R."/>
        </authorList>
    </citation>
    <scope>NUCLEOTIDE SEQUENCE [LARGE SCALE GENOMIC DNA]</scope>
    <source>
        <strain>O157:H7 / EDL933 / ATCC 700927 / EHEC</strain>
    </source>
</reference>
<reference key="2">
    <citation type="journal article" date="2001" name="DNA Res.">
        <title>Complete genome sequence of enterohemorrhagic Escherichia coli O157:H7 and genomic comparison with a laboratory strain K-12.</title>
        <authorList>
            <person name="Hayashi T."/>
            <person name="Makino K."/>
            <person name="Ohnishi M."/>
            <person name="Kurokawa K."/>
            <person name="Ishii K."/>
            <person name="Yokoyama K."/>
            <person name="Han C.-G."/>
            <person name="Ohtsubo E."/>
            <person name="Nakayama K."/>
            <person name="Murata T."/>
            <person name="Tanaka M."/>
            <person name="Tobe T."/>
            <person name="Iida T."/>
            <person name="Takami H."/>
            <person name="Honda T."/>
            <person name="Sasakawa C."/>
            <person name="Ogasawara N."/>
            <person name="Yasunaga T."/>
            <person name="Kuhara S."/>
            <person name="Shiba T."/>
            <person name="Hattori M."/>
            <person name="Shinagawa H."/>
        </authorList>
    </citation>
    <scope>NUCLEOTIDE SEQUENCE [LARGE SCALE GENOMIC DNA]</scope>
    <source>
        <strain>O157:H7 / Sakai / RIMD 0509952 / EHEC</strain>
    </source>
</reference>
<accession>Q8X5W3</accession>
<gene>
    <name evidence="1" type="primary">ydiU</name>
    <name evidence="1" type="synonym">selO</name>
    <name type="ordered locus">Z2735</name>
    <name type="ordered locus">ECs2413</name>
</gene>
<proteinExistence type="inferred from homology"/>